<reference key="1">
    <citation type="journal article" date="2001" name="Genome Res.">
        <title>The complete genome sequence of the lactic acid bacterium Lactococcus lactis ssp. lactis IL1403.</title>
        <authorList>
            <person name="Bolotin A."/>
            <person name="Wincker P."/>
            <person name="Mauger S."/>
            <person name="Jaillon O."/>
            <person name="Malarme K."/>
            <person name="Weissenbach J."/>
            <person name="Ehrlich S.D."/>
            <person name="Sorokin A."/>
        </authorList>
    </citation>
    <scope>NUCLEOTIDE SEQUENCE [LARGE SCALE GENOMIC DNA]</scope>
    <source>
        <strain>IL1403</strain>
    </source>
</reference>
<comment type="catalytic activity">
    <reaction>
        <text>(R)-pantothenate + ATP = (R)-4'-phosphopantothenate + ADP + H(+)</text>
        <dbReference type="Rhea" id="RHEA:16373"/>
        <dbReference type="ChEBI" id="CHEBI:10986"/>
        <dbReference type="ChEBI" id="CHEBI:15378"/>
        <dbReference type="ChEBI" id="CHEBI:29032"/>
        <dbReference type="ChEBI" id="CHEBI:30616"/>
        <dbReference type="ChEBI" id="CHEBI:456216"/>
        <dbReference type="EC" id="2.7.1.33"/>
    </reaction>
</comment>
<comment type="pathway">
    <text>Cofactor biosynthesis; coenzyme A biosynthesis; CoA from (R)-pantothenate: step 1/5.</text>
</comment>
<comment type="subcellular location">
    <subcellularLocation>
        <location evidence="1">Cytoplasm</location>
    </subcellularLocation>
</comment>
<comment type="similarity">
    <text evidence="3">Belongs to the prokaryotic pantothenate kinase family.</text>
</comment>
<feature type="chain" id="PRO_0000194432" description="Pantothenate kinase">
    <location>
        <begin position="1"/>
        <end position="306"/>
    </location>
</feature>
<feature type="binding site" evidence="2">
    <location>
        <begin position="90"/>
        <end position="97"/>
    </location>
    <ligand>
        <name>ATP</name>
        <dbReference type="ChEBI" id="CHEBI:30616"/>
    </ligand>
</feature>
<keyword id="KW-0067">ATP-binding</keyword>
<keyword id="KW-0173">Coenzyme A biosynthesis</keyword>
<keyword id="KW-0963">Cytoplasm</keyword>
<keyword id="KW-0418">Kinase</keyword>
<keyword id="KW-0547">Nucleotide-binding</keyword>
<keyword id="KW-1185">Reference proteome</keyword>
<keyword id="KW-0808">Transferase</keyword>
<evidence type="ECO:0000250" key="1"/>
<evidence type="ECO:0000255" key="2"/>
<evidence type="ECO:0000305" key="3"/>
<name>COAA_LACLA</name>
<protein>
    <recommendedName>
        <fullName>Pantothenate kinase</fullName>
        <ecNumber>2.7.1.33</ecNumber>
    </recommendedName>
    <alternativeName>
        <fullName>Pantothenic acid kinase</fullName>
    </alternativeName>
</protein>
<dbReference type="EC" id="2.7.1.33"/>
<dbReference type="EMBL" id="AE005176">
    <property type="protein sequence ID" value="AAK05542.1"/>
    <property type="molecule type" value="Genomic_DNA"/>
</dbReference>
<dbReference type="PIR" id="D86805">
    <property type="entry name" value="D86805"/>
</dbReference>
<dbReference type="RefSeq" id="NP_267600.1">
    <property type="nucleotide sequence ID" value="NC_002662.1"/>
</dbReference>
<dbReference type="RefSeq" id="WP_003130461.1">
    <property type="nucleotide sequence ID" value="NC_002662.1"/>
</dbReference>
<dbReference type="SMR" id="Q9CFM3"/>
<dbReference type="PaxDb" id="272623-L66222"/>
<dbReference type="EnsemblBacteria" id="AAK05542">
    <property type="protein sequence ID" value="AAK05542"/>
    <property type="gene ID" value="L66222"/>
</dbReference>
<dbReference type="KEGG" id="lla:L66222"/>
<dbReference type="PATRIC" id="fig|272623.7.peg.1552"/>
<dbReference type="eggNOG" id="COG1072">
    <property type="taxonomic scope" value="Bacteria"/>
</dbReference>
<dbReference type="HOGENOM" id="CLU_053818_1_1_9"/>
<dbReference type="OrthoDB" id="1550976at2"/>
<dbReference type="UniPathway" id="UPA00241">
    <property type="reaction ID" value="UER00352"/>
</dbReference>
<dbReference type="Proteomes" id="UP000002196">
    <property type="component" value="Chromosome"/>
</dbReference>
<dbReference type="GO" id="GO:0005737">
    <property type="term" value="C:cytoplasm"/>
    <property type="evidence" value="ECO:0007669"/>
    <property type="project" value="UniProtKB-SubCell"/>
</dbReference>
<dbReference type="GO" id="GO:0005524">
    <property type="term" value="F:ATP binding"/>
    <property type="evidence" value="ECO:0007669"/>
    <property type="project" value="UniProtKB-UniRule"/>
</dbReference>
<dbReference type="GO" id="GO:0004594">
    <property type="term" value="F:pantothenate kinase activity"/>
    <property type="evidence" value="ECO:0007669"/>
    <property type="project" value="UniProtKB-UniRule"/>
</dbReference>
<dbReference type="GO" id="GO:0015937">
    <property type="term" value="P:coenzyme A biosynthetic process"/>
    <property type="evidence" value="ECO:0007669"/>
    <property type="project" value="UniProtKB-UniRule"/>
</dbReference>
<dbReference type="CDD" id="cd02025">
    <property type="entry name" value="PanK"/>
    <property type="match status" value="1"/>
</dbReference>
<dbReference type="Gene3D" id="3.40.50.300">
    <property type="entry name" value="P-loop containing nucleotide triphosphate hydrolases"/>
    <property type="match status" value="1"/>
</dbReference>
<dbReference type="HAMAP" id="MF_00215">
    <property type="entry name" value="Pantothen_kinase_1"/>
    <property type="match status" value="1"/>
</dbReference>
<dbReference type="InterPro" id="IPR027417">
    <property type="entry name" value="P-loop_NTPase"/>
</dbReference>
<dbReference type="InterPro" id="IPR004566">
    <property type="entry name" value="PanK"/>
</dbReference>
<dbReference type="InterPro" id="IPR006083">
    <property type="entry name" value="PRK/URK"/>
</dbReference>
<dbReference type="NCBIfam" id="TIGR00554">
    <property type="entry name" value="panK_bact"/>
    <property type="match status" value="1"/>
</dbReference>
<dbReference type="PANTHER" id="PTHR10285">
    <property type="entry name" value="URIDINE KINASE"/>
    <property type="match status" value="1"/>
</dbReference>
<dbReference type="Pfam" id="PF00485">
    <property type="entry name" value="PRK"/>
    <property type="match status" value="1"/>
</dbReference>
<dbReference type="PIRSF" id="PIRSF000545">
    <property type="entry name" value="Pantothenate_kin"/>
    <property type="match status" value="1"/>
</dbReference>
<dbReference type="SUPFAM" id="SSF52540">
    <property type="entry name" value="P-loop containing nucleoside triphosphate hydrolases"/>
    <property type="match status" value="1"/>
</dbReference>
<organism>
    <name type="scientific">Lactococcus lactis subsp. lactis (strain IL1403)</name>
    <name type="common">Streptococcus lactis</name>
    <dbReference type="NCBI Taxonomy" id="272623"/>
    <lineage>
        <taxon>Bacteria</taxon>
        <taxon>Bacillati</taxon>
        <taxon>Bacillota</taxon>
        <taxon>Bacilli</taxon>
        <taxon>Lactobacillales</taxon>
        <taxon>Streptococcaceae</taxon>
        <taxon>Lactococcus</taxon>
    </lineage>
</organism>
<proteinExistence type="inferred from homology"/>
<accession>Q9CFM3</accession>
<sequence length="306" mass="35992">MNEFINFDEISRKTWQNLYNTSIAPLTHDELESIRSLNDEISLQDVEDVYLPLIHLLRLYKKNLEDMSYSKGLFLQKIVKTPPLIIGISGSVAVGKSTTARLLQLLLSRAFPKLTVDLVTTDGFLYTTNDLKNMGILDRKGFPESYDMEKLTSFLYHVKNGEKFEVPIYSHETYDILPNQSQIIDSPDILIVEGINVLQNPQNQLLYISDFYDFSIYVDADEKLIEKWYLERFDSLLKLAKYDQTNFYHQFTKMPEDKVINLAREIWARVNRVNLREYIEPTRNRAEIILHKTENHYIDKIYLKKF</sequence>
<gene>
    <name type="primary">coaA</name>
    <name type="ordered locus">LL1444</name>
    <name type="ORF">L66222</name>
</gene>